<sequence>MVCIPCIVIPVLLWVYKKFLEPIVYPFISPIINRIWPRKAVQSASTSAKKEESNGTCKASGTSITNGSVSRGEEAVPDKKTD</sequence>
<comment type="subcellular location">
    <subcellularLocation>
        <location evidence="1">Endoplasmic reticulum</location>
    </subcellularLocation>
    <subcellularLocation>
        <location evidence="1">Lipid droplet</location>
    </subcellularLocation>
</comment>
<comment type="similarity">
    <text evidence="3">Belongs to the UPF0729 family.</text>
</comment>
<feature type="chain" id="PRO_0000321911" description="UPF0729 protein C18orf32 homolog">
    <location>
        <begin position="1"/>
        <end position="82"/>
    </location>
</feature>
<feature type="region of interest" description="Necessary for its localzation to the endoplasmic reticulum and lipid droplets" evidence="1">
    <location>
        <begin position="1"/>
        <end position="37"/>
    </location>
</feature>
<feature type="region of interest" description="Disordered" evidence="2">
    <location>
        <begin position="46"/>
        <end position="82"/>
    </location>
</feature>
<feature type="compositionally biased region" description="Polar residues" evidence="2">
    <location>
        <begin position="54"/>
        <end position="69"/>
    </location>
</feature>
<feature type="compositionally biased region" description="Basic and acidic residues" evidence="2">
    <location>
        <begin position="71"/>
        <end position="82"/>
    </location>
</feature>
<evidence type="ECO:0000250" key="1">
    <source>
        <dbReference type="UniProtKB" id="Q8TCD1"/>
    </source>
</evidence>
<evidence type="ECO:0000256" key="2">
    <source>
        <dbReference type="SAM" id="MobiDB-lite"/>
    </source>
</evidence>
<evidence type="ECO:0000305" key="3"/>
<proteinExistence type="inferred from homology"/>
<protein>
    <recommendedName>
        <fullName>UPF0729 protein C18orf32 homolog</fullName>
    </recommendedName>
</protein>
<accession>Q28I13</accession>
<gene>
    <name type="ORF">TEgg055k19.1</name>
</gene>
<reference key="1">
    <citation type="submission" date="2006-10" db="EMBL/GenBank/DDBJ databases">
        <authorList>
            <consortium name="Sanger Xenopus tropicalis EST/cDNA project"/>
        </authorList>
    </citation>
    <scope>NUCLEOTIDE SEQUENCE [LARGE SCALE MRNA]</scope>
    <source>
        <tissue>Egg</tissue>
    </source>
</reference>
<organism>
    <name type="scientific">Xenopus tropicalis</name>
    <name type="common">Western clawed frog</name>
    <name type="synonym">Silurana tropicalis</name>
    <dbReference type="NCBI Taxonomy" id="8364"/>
    <lineage>
        <taxon>Eukaryota</taxon>
        <taxon>Metazoa</taxon>
        <taxon>Chordata</taxon>
        <taxon>Craniata</taxon>
        <taxon>Vertebrata</taxon>
        <taxon>Euteleostomi</taxon>
        <taxon>Amphibia</taxon>
        <taxon>Batrachia</taxon>
        <taxon>Anura</taxon>
        <taxon>Pipoidea</taxon>
        <taxon>Pipidae</taxon>
        <taxon>Xenopodinae</taxon>
        <taxon>Xenopus</taxon>
        <taxon>Silurana</taxon>
    </lineage>
</organism>
<dbReference type="EMBL" id="CR760644">
    <property type="protein sequence ID" value="CAJ81349.1"/>
    <property type="molecule type" value="mRNA"/>
</dbReference>
<dbReference type="FunCoup" id="Q28I13">
    <property type="interactions" value="528"/>
</dbReference>
<dbReference type="STRING" id="8364.ENSXETP00000028849"/>
<dbReference type="PaxDb" id="8364-ENSXETP00000056329"/>
<dbReference type="KEGG" id="xtr:733505"/>
<dbReference type="AGR" id="Xenbase:XB-GENE-944582"/>
<dbReference type="CTD" id="100738675"/>
<dbReference type="Xenbase" id="XB-GENE-944582">
    <property type="gene designation" value="c1h18orf32"/>
</dbReference>
<dbReference type="eggNOG" id="ENOG502S738">
    <property type="taxonomic scope" value="Eukaryota"/>
</dbReference>
<dbReference type="HOGENOM" id="CLU_191635_0_0_1"/>
<dbReference type="InParanoid" id="Q28I13"/>
<dbReference type="OMA" id="PIINTFW"/>
<dbReference type="OrthoDB" id="10062823at2759"/>
<dbReference type="PhylomeDB" id="Q28I13"/>
<dbReference type="TreeFam" id="TF324662"/>
<dbReference type="Proteomes" id="UP000008143">
    <property type="component" value="Chromosome 1"/>
</dbReference>
<dbReference type="Bgee" id="ENSXETG00000026840">
    <property type="expression patterns" value="Expressed in egg cell and 14 other cell types or tissues"/>
</dbReference>
<dbReference type="GO" id="GO:0005783">
    <property type="term" value="C:endoplasmic reticulum"/>
    <property type="evidence" value="ECO:0000250"/>
    <property type="project" value="UniProtKB"/>
</dbReference>
<dbReference type="GO" id="GO:0005811">
    <property type="term" value="C:lipid droplet"/>
    <property type="evidence" value="ECO:0000250"/>
    <property type="project" value="UniProtKB"/>
</dbReference>
<dbReference type="InterPro" id="IPR026776">
    <property type="entry name" value="UPF0729_C18orf32-like"/>
</dbReference>
<dbReference type="PANTHER" id="PTHR13456">
    <property type="entry name" value="UPF0729 PROTEIN C18ORF32"/>
    <property type="match status" value="1"/>
</dbReference>
<dbReference type="PANTHER" id="PTHR13456:SF0">
    <property type="entry name" value="UPF0729 PROTEIN C18ORF32"/>
    <property type="match status" value="1"/>
</dbReference>
<dbReference type="Pfam" id="PF14975">
    <property type="entry name" value="DUF4512"/>
    <property type="match status" value="1"/>
</dbReference>
<keyword id="KW-0256">Endoplasmic reticulum</keyword>
<keyword id="KW-0551">Lipid droplet</keyword>
<keyword id="KW-1185">Reference proteome</keyword>
<name>CR032_XENTR</name>